<protein>
    <recommendedName>
        <fullName>Tubulin alpha-4A chain</fullName>
        <ecNumber evidence="2">3.6.5.-</ecNumber>
    </recommendedName>
    <alternativeName>
        <fullName>Alpha-tubulin 4</fullName>
    </alternativeName>
    <alternativeName>
        <fullName>Tubulin alpha-4 chain</fullName>
    </alternativeName>
</protein>
<gene>
    <name type="primary">Tuba4a</name>
    <name type="synonym">Tuba4</name>
</gene>
<organism>
    <name type="scientific">Rattus norvegicus</name>
    <name type="common">Rat</name>
    <dbReference type="NCBI Taxonomy" id="10116"/>
    <lineage>
        <taxon>Eukaryota</taxon>
        <taxon>Metazoa</taxon>
        <taxon>Chordata</taxon>
        <taxon>Craniata</taxon>
        <taxon>Vertebrata</taxon>
        <taxon>Euteleostomi</taxon>
        <taxon>Mammalia</taxon>
        <taxon>Eutheria</taxon>
        <taxon>Euarchontoglires</taxon>
        <taxon>Glires</taxon>
        <taxon>Rodentia</taxon>
        <taxon>Myomorpha</taxon>
        <taxon>Muroidea</taxon>
        <taxon>Muridae</taxon>
        <taxon>Murinae</taxon>
        <taxon>Rattus</taxon>
    </lineage>
</organism>
<evidence type="ECO:0000250" key="1"/>
<evidence type="ECO:0000250" key="2">
    <source>
        <dbReference type="UniProtKB" id="P68363"/>
    </source>
</evidence>
<evidence type="ECO:0000250" key="3">
    <source>
        <dbReference type="UniProtKB" id="P68366"/>
    </source>
</evidence>
<evidence type="ECO:0000250" key="4">
    <source>
        <dbReference type="UniProtKB" id="P68368"/>
    </source>
</evidence>
<evidence type="ECO:0000250" key="5">
    <source>
        <dbReference type="UniProtKB" id="Q71U36"/>
    </source>
</evidence>
<evidence type="ECO:0000250" key="6">
    <source>
        <dbReference type="UniProtKB" id="Q9BQE3"/>
    </source>
</evidence>
<evidence type="ECO:0000305" key="7"/>
<evidence type="ECO:0007744" key="8">
    <source>
    </source>
</evidence>
<sequence length="448" mass="49924">MRECISVHVGQAGVQMGNACWELYCLEHGIQPDGQMPSDKTIGGGDDSFTTFFCETGAGKHVPRAVFVDLEPTVIDEIRNGPYRQLFHPEQLITGKEDAANNYARGHYTIGKEIIDPVLDRIRKLSDQCTGLQGFLVFHSFGGGTGSGFTSLLMERLSVDYGKKSKLEFSIYPAPQVSTAVVEPYNSILTTHTTLEHSDCAFMVDNEAIYDICRRNLDIERPTYTNLNRLISQIVSSITASLRFDGALNVDLTEFQTNLVPYPRIHFPLATYAPVISAEKAYHEQLSVAEITNACFEPANQMVKCDPRHGKYMACCLLYRGDVVPKDVNAAIAAIKTKRSIQFVDWCPTGFKVGINYQPPTVVPGGDLAKVQRAVCMLSNTTAIAEAWARLDHKFDLMYAKRAFVHWYVGEGMEEGEFSEAREDMAALEKDYEEVGIDSYEDEDEGEE</sequence>
<proteinExistence type="evidence at protein level"/>
<reference key="1">
    <citation type="journal article" date="2004" name="Genome Res.">
        <title>The status, quality, and expansion of the NIH full-length cDNA project: the Mammalian Gene Collection (MGC).</title>
        <authorList>
            <consortium name="The MGC Project Team"/>
        </authorList>
    </citation>
    <scope>NUCLEOTIDE SEQUENCE [LARGE SCALE MRNA]</scope>
    <source>
        <tissue>Heart</tissue>
    </source>
</reference>
<reference key="2">
    <citation type="journal article" date="2012" name="Nat. Commun.">
        <title>Quantitative maps of protein phosphorylation sites across 14 different rat organs and tissues.</title>
        <authorList>
            <person name="Lundby A."/>
            <person name="Secher A."/>
            <person name="Lage K."/>
            <person name="Nordsborg N.B."/>
            <person name="Dmytriyev A."/>
            <person name="Lundby C."/>
            <person name="Olsen J.V."/>
        </authorList>
    </citation>
    <scope>PHOSPHORYLATION [LARGE SCALE ANALYSIS] AT SER-439</scope>
    <scope>IDENTIFICATION BY MASS SPECTROMETRY [LARGE SCALE ANALYSIS]</scope>
</reference>
<accession>Q5XIF6</accession>
<comment type="function">
    <text>Tubulin is the major constituent of microtubules, a cylinder consisting of laterally associated linear protofilaments composed of alpha- and beta-tubulin heterodimers. Microtubules grow by the addition of GTP-tubulin dimers to the microtubule end, where a stabilizing cap forms. Below the cap, tubulin dimers are in GDP-bound state, owing to GTPase activity of alpha-tubulin.</text>
</comment>
<comment type="catalytic activity">
    <reaction evidence="2">
        <text>GTP + H2O = GDP + phosphate + H(+)</text>
        <dbReference type="Rhea" id="RHEA:19669"/>
        <dbReference type="ChEBI" id="CHEBI:15377"/>
        <dbReference type="ChEBI" id="CHEBI:15378"/>
        <dbReference type="ChEBI" id="CHEBI:37565"/>
        <dbReference type="ChEBI" id="CHEBI:43474"/>
        <dbReference type="ChEBI" id="CHEBI:58189"/>
    </reaction>
    <physiologicalReaction direction="left-to-right" evidence="2">
        <dbReference type="Rhea" id="RHEA:19670"/>
    </physiologicalReaction>
</comment>
<comment type="cofactor">
    <cofactor evidence="2">
        <name>Mg(2+)</name>
        <dbReference type="ChEBI" id="CHEBI:18420"/>
    </cofactor>
</comment>
<comment type="subunit">
    <text evidence="4">Dimer of alpha and beta chains. A typical microtubule is a hollow water-filled tube with an outer diameter of 25 nm and an inner diameter of 15 nM. Alpha-beta heterodimers associate head-to-tail to form protofilaments running lengthwise along the microtubule wall with the beta-tubulin subunit facing the microtubule plus end conferring a structural polarity. Microtubules usually have 13 protofilaments but different protofilament numbers can be found in some organisms and specialized cells. Interacts with CFAP157 (By similarity).</text>
</comment>
<comment type="subcellular location">
    <subcellularLocation>
        <location evidence="1">Cytoplasm</location>
        <location evidence="1">Cytoskeleton</location>
    </subcellularLocation>
</comment>
<comment type="domain">
    <text evidence="2">The MREC motif may be critical for tubulin autoregulation.</text>
</comment>
<comment type="PTM">
    <text evidence="4">Some glutamate residues at the C-terminus are polyglycylated, resulting in polyglycine chains on the gamma-carboxyl group. Glycylation is mainly limited to tubulin incorporated into axonemes (cilia and flagella) whereas glutamylation is prevalent in neuronal cells, centrioles, axonemes, and the mitotic spindle. Both modifications can coexist on the same protein on adjacent residues, and lowering polyglycylation levels increases polyglutamylation, and reciprocally. Cilia and flagella glycylation is required for their stability and maintenance. Flagella glycylation controls sperm motility.</text>
</comment>
<comment type="PTM">
    <text evidence="4 5">Some glutamate residues at the C-terminus are polyglutamylated, resulting in polyglutamate chains on the gamma-carboxyl group (By similarity). Polyglutamylation plays a key role in microtubule severing by spastin (SPAST). SPAST preferentially recognizes and acts on microtubules decorated with short polyglutamate tails: severing activity by SPAST increases as the number of glutamates per tubulin rises from one to eight, but decreases beyond this glutamylation threshold (By similarity). Glutamylation is also involved in cilia motility (By similarity).</text>
</comment>
<comment type="PTM">
    <text evidence="5">Acetylation of alpha chains at Lys-40 is located inside the microtubule lumen. This modification has been correlated with increased microtubule stability, intracellular transport and ciliary assembly.</text>
</comment>
<comment type="PTM">
    <text evidence="2">Methylation of alpha chains at Lys-40 is found in mitotic microtubules and is required for normal mitosis and cytokinesis contributing to genomic stability.</text>
</comment>
<comment type="PTM">
    <text evidence="3">Although this tubulin does not encode a C-terminal tyrosine, a C-terminal tyrosine can be added post-translationally by the tubulin tyrosine ligase (TTL). It can then undergo a detyrosination cycle by the tubulin tyrosine carboxypeptidase (MATCAP1/KIAA0895L).</text>
</comment>
<comment type="miscellaneous">
    <text>This tubulin does not have a C-terminal tyrosine.</text>
</comment>
<comment type="similarity">
    <text evidence="7">Belongs to the tubulin family.</text>
</comment>
<keyword id="KW-0007">Acetylation</keyword>
<keyword id="KW-0963">Cytoplasm</keyword>
<keyword id="KW-0206">Cytoskeleton</keyword>
<keyword id="KW-0342">GTP-binding</keyword>
<keyword id="KW-0378">Hydrolase</keyword>
<keyword id="KW-0460">Magnesium</keyword>
<keyword id="KW-0479">Metal-binding</keyword>
<keyword id="KW-0488">Methylation</keyword>
<keyword id="KW-0493">Microtubule</keyword>
<keyword id="KW-0944">Nitration</keyword>
<keyword id="KW-0547">Nucleotide-binding</keyword>
<keyword id="KW-0597">Phosphoprotein</keyword>
<keyword id="KW-1185">Reference proteome</keyword>
<dbReference type="EC" id="3.6.5.-" evidence="2"/>
<dbReference type="EMBL" id="BC083726">
    <property type="protein sequence ID" value="AAH83726.1"/>
    <property type="molecule type" value="mRNA"/>
</dbReference>
<dbReference type="RefSeq" id="NP_001007005.1">
    <property type="nucleotide sequence ID" value="NM_001007004.2"/>
</dbReference>
<dbReference type="RefSeq" id="XP_063123300.1">
    <property type="nucleotide sequence ID" value="XM_063267230.1"/>
</dbReference>
<dbReference type="SMR" id="Q5XIF6"/>
<dbReference type="BioGRID" id="261372">
    <property type="interactions" value="6"/>
</dbReference>
<dbReference type="FunCoup" id="Q5XIF6">
    <property type="interactions" value="1375"/>
</dbReference>
<dbReference type="IntAct" id="Q5XIF6">
    <property type="interactions" value="6"/>
</dbReference>
<dbReference type="MINT" id="Q5XIF6"/>
<dbReference type="STRING" id="10116.ENSRNOP00000004797"/>
<dbReference type="CarbonylDB" id="Q5XIF6"/>
<dbReference type="GlyGen" id="Q5XIF6">
    <property type="glycosylation" value="1 site, 1 O-linked glycan (1 site)"/>
</dbReference>
<dbReference type="iPTMnet" id="Q5XIF6"/>
<dbReference type="PhosphoSitePlus" id="Q5XIF6"/>
<dbReference type="jPOST" id="Q5XIF6"/>
<dbReference type="PaxDb" id="10116-ENSRNOP00000004797"/>
<dbReference type="Ensembl" id="ENSRNOT00000004797.6">
    <property type="protein sequence ID" value="ENSRNOP00000004797.5"/>
    <property type="gene ID" value="ENSRNOG00000003597.6"/>
</dbReference>
<dbReference type="GeneID" id="316531"/>
<dbReference type="KEGG" id="rno:316531"/>
<dbReference type="UCSC" id="RGD:1359623">
    <property type="organism name" value="rat"/>
</dbReference>
<dbReference type="AGR" id="RGD:1359623"/>
<dbReference type="CTD" id="7277"/>
<dbReference type="RGD" id="1359623">
    <property type="gene designation" value="Tuba4a"/>
</dbReference>
<dbReference type="eggNOG" id="KOG1376">
    <property type="taxonomic scope" value="Eukaryota"/>
</dbReference>
<dbReference type="GeneTree" id="ENSGT00950000183165"/>
<dbReference type="HOGENOM" id="CLU_015718_0_0_1"/>
<dbReference type="InParanoid" id="Q5XIF6"/>
<dbReference type="OMA" id="RRVTDNC"/>
<dbReference type="OrthoDB" id="17919at9989"/>
<dbReference type="PhylomeDB" id="Q5XIF6"/>
<dbReference type="TreeFam" id="TF300314"/>
<dbReference type="Reactome" id="R-RNO-114608">
    <property type="pathway name" value="Platelet degranulation"/>
</dbReference>
<dbReference type="Reactome" id="R-RNO-190840">
    <property type="pathway name" value="Microtubule-dependent trafficking of connexons from Golgi to the plasma membrane"/>
</dbReference>
<dbReference type="Reactome" id="R-RNO-2132295">
    <property type="pathway name" value="MHC class II antigen presentation"/>
</dbReference>
<dbReference type="Reactome" id="R-RNO-2467813">
    <property type="pathway name" value="Separation of Sister Chromatids"/>
</dbReference>
<dbReference type="Reactome" id="R-RNO-2500257">
    <property type="pathway name" value="Resolution of Sister Chromatid Cohesion"/>
</dbReference>
<dbReference type="Reactome" id="R-RNO-2565942">
    <property type="pathway name" value="Regulation of PLK1 Activity at G2/M Transition"/>
</dbReference>
<dbReference type="Reactome" id="R-RNO-3371497">
    <property type="pathway name" value="HSP90 chaperone cycle for steroid hormone receptors (SHR) in the presence of ligand"/>
</dbReference>
<dbReference type="Reactome" id="R-RNO-380259">
    <property type="pathway name" value="Loss of Nlp from mitotic centrosomes"/>
</dbReference>
<dbReference type="Reactome" id="R-RNO-380270">
    <property type="pathway name" value="Recruitment of mitotic centrosome proteins and complexes"/>
</dbReference>
<dbReference type="Reactome" id="R-RNO-380284">
    <property type="pathway name" value="Loss of proteins required for interphase microtubule organization from the centrosome"/>
</dbReference>
<dbReference type="Reactome" id="R-RNO-380320">
    <property type="pathway name" value="Recruitment of NuMA to mitotic centrosomes"/>
</dbReference>
<dbReference type="Reactome" id="R-RNO-437239">
    <property type="pathway name" value="Recycling pathway of L1"/>
</dbReference>
<dbReference type="Reactome" id="R-RNO-5610787">
    <property type="pathway name" value="Hedgehog 'off' state"/>
</dbReference>
<dbReference type="Reactome" id="R-RNO-5617833">
    <property type="pathway name" value="Cilium Assembly"/>
</dbReference>
<dbReference type="Reactome" id="R-RNO-5620912">
    <property type="pathway name" value="Anchoring of the basal body to the plasma membrane"/>
</dbReference>
<dbReference type="Reactome" id="R-RNO-5620924">
    <property type="pathway name" value="Intraflagellar transport"/>
</dbReference>
<dbReference type="Reactome" id="R-RNO-5626467">
    <property type="pathway name" value="RHO GTPases activate IQGAPs"/>
</dbReference>
<dbReference type="Reactome" id="R-RNO-5663220">
    <property type="pathway name" value="RHO GTPases Activate Formins"/>
</dbReference>
<dbReference type="Reactome" id="R-RNO-6807878">
    <property type="pathway name" value="COPI-mediated anterograde transport"/>
</dbReference>
<dbReference type="Reactome" id="R-RNO-6811434">
    <property type="pathway name" value="COPI-dependent Golgi-to-ER retrograde traffic"/>
</dbReference>
<dbReference type="Reactome" id="R-RNO-6811436">
    <property type="pathway name" value="COPI-independent Golgi-to-ER retrograde traffic"/>
</dbReference>
<dbReference type="Reactome" id="R-RNO-68877">
    <property type="pathway name" value="Mitotic Prometaphase"/>
</dbReference>
<dbReference type="Reactome" id="R-RNO-8852276">
    <property type="pathway name" value="The role of GTSE1 in G2/M progression after G2 checkpoint"/>
</dbReference>
<dbReference type="Reactome" id="R-RNO-8854518">
    <property type="pathway name" value="AURKA Activation by TPX2"/>
</dbReference>
<dbReference type="Reactome" id="R-RNO-8955332">
    <property type="pathway name" value="Carboxyterminal post-translational modifications of tubulin"/>
</dbReference>
<dbReference type="Reactome" id="R-RNO-9646399">
    <property type="pathway name" value="Aggrephagy"/>
</dbReference>
<dbReference type="Reactome" id="R-RNO-9648025">
    <property type="pathway name" value="EML4 and NUDC in mitotic spindle formation"/>
</dbReference>
<dbReference type="Reactome" id="R-RNO-9668328">
    <property type="pathway name" value="Sealing of the nuclear envelope (NE) by ESCRT-III"/>
</dbReference>
<dbReference type="Reactome" id="R-RNO-983189">
    <property type="pathway name" value="Kinesins"/>
</dbReference>
<dbReference type="Reactome" id="R-RNO-9833482">
    <property type="pathway name" value="PKR-mediated signaling"/>
</dbReference>
<dbReference type="PRO" id="PR:Q5XIF6"/>
<dbReference type="Proteomes" id="UP000002494">
    <property type="component" value="Chromosome 9"/>
</dbReference>
<dbReference type="Bgee" id="ENSRNOG00000003597">
    <property type="expression patterns" value="Expressed in skeletal muscle tissue and 20 other cell types or tissues"/>
</dbReference>
<dbReference type="GO" id="GO:0005737">
    <property type="term" value="C:cytoplasm"/>
    <property type="evidence" value="ECO:0000318"/>
    <property type="project" value="GO_Central"/>
</dbReference>
<dbReference type="GO" id="GO:0005856">
    <property type="term" value="C:cytoskeleton"/>
    <property type="evidence" value="ECO:0000266"/>
    <property type="project" value="RGD"/>
</dbReference>
<dbReference type="GO" id="GO:0005874">
    <property type="term" value="C:microtubule"/>
    <property type="evidence" value="ECO:0000266"/>
    <property type="project" value="RGD"/>
</dbReference>
<dbReference type="GO" id="GO:0019899">
    <property type="term" value="F:enzyme binding"/>
    <property type="evidence" value="ECO:0000266"/>
    <property type="project" value="RGD"/>
</dbReference>
<dbReference type="GO" id="GO:0005525">
    <property type="term" value="F:GTP binding"/>
    <property type="evidence" value="ECO:0000318"/>
    <property type="project" value="GO_Central"/>
</dbReference>
<dbReference type="GO" id="GO:0016787">
    <property type="term" value="F:hydrolase activity"/>
    <property type="evidence" value="ECO:0007669"/>
    <property type="project" value="UniProtKB-KW"/>
</dbReference>
<dbReference type="GO" id="GO:0046872">
    <property type="term" value="F:metal ion binding"/>
    <property type="evidence" value="ECO:0007669"/>
    <property type="project" value="UniProtKB-KW"/>
</dbReference>
<dbReference type="GO" id="GO:0019901">
    <property type="term" value="F:protein kinase binding"/>
    <property type="evidence" value="ECO:0000266"/>
    <property type="project" value="RGD"/>
</dbReference>
<dbReference type="GO" id="GO:0005200">
    <property type="term" value="F:structural constituent of cytoskeleton"/>
    <property type="evidence" value="ECO:0000318"/>
    <property type="project" value="GO_Central"/>
</dbReference>
<dbReference type="GO" id="GO:0000226">
    <property type="term" value="P:microtubule cytoskeleton organization"/>
    <property type="evidence" value="ECO:0000318"/>
    <property type="project" value="GO_Central"/>
</dbReference>
<dbReference type="GO" id="GO:0000278">
    <property type="term" value="P:mitotic cell cycle"/>
    <property type="evidence" value="ECO:0000318"/>
    <property type="project" value="GO_Central"/>
</dbReference>
<dbReference type="CDD" id="cd02186">
    <property type="entry name" value="alpha_tubulin"/>
    <property type="match status" value="1"/>
</dbReference>
<dbReference type="FunFam" id="1.10.287.600:FF:000005">
    <property type="entry name" value="Tubulin alpha chain"/>
    <property type="match status" value="1"/>
</dbReference>
<dbReference type="FunFam" id="3.30.1330.20:FF:000001">
    <property type="entry name" value="Tubulin alpha chain"/>
    <property type="match status" value="1"/>
</dbReference>
<dbReference type="FunFam" id="3.40.50.1440:FF:000002">
    <property type="entry name" value="Tubulin alpha chain"/>
    <property type="match status" value="1"/>
</dbReference>
<dbReference type="Gene3D" id="1.10.287.600">
    <property type="entry name" value="Helix hairpin bin"/>
    <property type="match status" value="1"/>
</dbReference>
<dbReference type="Gene3D" id="3.30.1330.20">
    <property type="entry name" value="Tubulin/FtsZ, C-terminal domain"/>
    <property type="match status" value="1"/>
</dbReference>
<dbReference type="Gene3D" id="3.40.50.1440">
    <property type="entry name" value="Tubulin/FtsZ, GTPase domain"/>
    <property type="match status" value="1"/>
</dbReference>
<dbReference type="InterPro" id="IPR002452">
    <property type="entry name" value="Alpha_tubulin"/>
</dbReference>
<dbReference type="InterPro" id="IPR008280">
    <property type="entry name" value="Tub_FtsZ_C"/>
</dbReference>
<dbReference type="InterPro" id="IPR000217">
    <property type="entry name" value="Tubulin"/>
</dbReference>
<dbReference type="InterPro" id="IPR037103">
    <property type="entry name" value="Tubulin/FtsZ-like_C"/>
</dbReference>
<dbReference type="InterPro" id="IPR018316">
    <property type="entry name" value="Tubulin/FtsZ_2-layer-sand-dom"/>
</dbReference>
<dbReference type="InterPro" id="IPR036525">
    <property type="entry name" value="Tubulin/FtsZ_GTPase_sf"/>
</dbReference>
<dbReference type="InterPro" id="IPR023123">
    <property type="entry name" value="Tubulin_C"/>
</dbReference>
<dbReference type="InterPro" id="IPR017975">
    <property type="entry name" value="Tubulin_CS"/>
</dbReference>
<dbReference type="InterPro" id="IPR003008">
    <property type="entry name" value="Tubulin_FtsZ_GTPase"/>
</dbReference>
<dbReference type="PANTHER" id="PTHR11588">
    <property type="entry name" value="TUBULIN"/>
    <property type="match status" value="1"/>
</dbReference>
<dbReference type="Pfam" id="PF00091">
    <property type="entry name" value="Tubulin"/>
    <property type="match status" value="1"/>
</dbReference>
<dbReference type="Pfam" id="PF03953">
    <property type="entry name" value="Tubulin_C"/>
    <property type="match status" value="1"/>
</dbReference>
<dbReference type="PRINTS" id="PR01162">
    <property type="entry name" value="ALPHATUBULIN"/>
</dbReference>
<dbReference type="PRINTS" id="PR01161">
    <property type="entry name" value="TUBULIN"/>
</dbReference>
<dbReference type="SMART" id="SM00864">
    <property type="entry name" value="Tubulin"/>
    <property type="match status" value="1"/>
</dbReference>
<dbReference type="SMART" id="SM00865">
    <property type="entry name" value="Tubulin_C"/>
    <property type="match status" value="1"/>
</dbReference>
<dbReference type="SUPFAM" id="SSF55307">
    <property type="entry name" value="Tubulin C-terminal domain-like"/>
    <property type="match status" value="1"/>
</dbReference>
<dbReference type="SUPFAM" id="SSF52490">
    <property type="entry name" value="Tubulin nucleotide-binding domain-like"/>
    <property type="match status" value="1"/>
</dbReference>
<dbReference type="PROSITE" id="PS00227">
    <property type="entry name" value="TUBULIN"/>
    <property type="match status" value="1"/>
</dbReference>
<name>TBA4A_RAT</name>
<feature type="chain" id="PRO_0000288715" description="Tubulin alpha-4A chain">
    <location>
        <begin position="1"/>
        <end position="448"/>
    </location>
</feature>
<feature type="short sequence motif" description="MREC motif" evidence="2">
    <location>
        <begin position="1"/>
        <end position="4"/>
    </location>
</feature>
<feature type="active site" evidence="2">
    <location>
        <position position="254"/>
    </location>
</feature>
<feature type="binding site" evidence="2">
    <location>
        <position position="11"/>
    </location>
    <ligand>
        <name>GTP</name>
        <dbReference type="ChEBI" id="CHEBI:37565"/>
    </ligand>
</feature>
<feature type="binding site" evidence="2">
    <location>
        <position position="71"/>
    </location>
    <ligand>
        <name>GTP</name>
        <dbReference type="ChEBI" id="CHEBI:37565"/>
    </ligand>
</feature>
<feature type="binding site" evidence="2">
    <location>
        <position position="71"/>
    </location>
    <ligand>
        <name>Mg(2+)</name>
        <dbReference type="ChEBI" id="CHEBI:18420"/>
    </ligand>
</feature>
<feature type="binding site" evidence="2">
    <location>
        <position position="140"/>
    </location>
    <ligand>
        <name>GTP</name>
        <dbReference type="ChEBI" id="CHEBI:37565"/>
    </ligand>
</feature>
<feature type="binding site" evidence="2">
    <location>
        <position position="144"/>
    </location>
    <ligand>
        <name>GTP</name>
        <dbReference type="ChEBI" id="CHEBI:37565"/>
    </ligand>
</feature>
<feature type="binding site" evidence="2">
    <location>
        <position position="145"/>
    </location>
    <ligand>
        <name>GTP</name>
        <dbReference type="ChEBI" id="CHEBI:37565"/>
    </ligand>
</feature>
<feature type="binding site" evidence="2">
    <location>
        <position position="179"/>
    </location>
    <ligand>
        <name>GTP</name>
        <dbReference type="ChEBI" id="CHEBI:37565"/>
    </ligand>
</feature>
<feature type="binding site" evidence="2">
    <location>
        <position position="206"/>
    </location>
    <ligand>
        <name>GTP</name>
        <dbReference type="ChEBI" id="CHEBI:37565"/>
    </ligand>
</feature>
<feature type="binding site" evidence="2">
    <location>
        <position position="228"/>
    </location>
    <ligand>
        <name>GTP</name>
        <dbReference type="ChEBI" id="CHEBI:37565"/>
    </ligand>
</feature>
<feature type="modified residue" description="N6-acetyllysine" evidence="3">
    <location>
        <position position="40"/>
    </location>
</feature>
<feature type="modified residue" description="Phosphoserine" evidence="3">
    <location>
        <position position="48"/>
    </location>
</feature>
<feature type="modified residue" description="3'-nitrotyrosine" evidence="4">
    <location>
        <position position="83"/>
    </location>
</feature>
<feature type="modified residue" description="Phosphotyrosine" evidence="6">
    <location>
        <position position="432"/>
    </location>
</feature>
<feature type="modified residue" description="Phosphoserine" evidence="8">
    <location>
        <position position="439"/>
    </location>
</feature>